<dbReference type="EMBL" id="DQ157011">
    <property type="protein sequence ID" value="ABA40405.1"/>
    <property type="molecule type" value="mRNA"/>
</dbReference>
<dbReference type="EMBL" id="DQ157012">
    <property type="protein sequence ID" value="ABA40406.1"/>
    <property type="molecule type" value="mRNA"/>
</dbReference>
<dbReference type="EMBL" id="DQ113420">
    <property type="protein sequence ID" value="ABA41356.1"/>
    <property type="molecule type" value="mRNA"/>
</dbReference>
<dbReference type="EMBL" id="EF100680">
    <property type="protein sequence ID" value="ABO15820.1"/>
    <property type="molecule type" value="mRNA"/>
</dbReference>
<dbReference type="RefSeq" id="NP_001078874.1">
    <property type="nucleotide sequence ID" value="NM_001085405.1"/>
</dbReference>
<dbReference type="SMR" id="Q0ZUP0"/>
<dbReference type="FunCoup" id="Q0ZUP0">
    <property type="interactions" value="1"/>
</dbReference>
<dbReference type="STRING" id="10116.ENSRNOP00000072670"/>
<dbReference type="PaxDb" id="10116-ENSRNOP00000036493"/>
<dbReference type="Ensembl" id="ENSRNOT00000084289.2">
    <property type="protein sequence ID" value="ENSRNOP00000072670.1"/>
    <property type="gene ID" value="ENSRNOG00000057410.2"/>
</dbReference>
<dbReference type="GeneID" id="689817"/>
<dbReference type="KEGG" id="rno:689817"/>
<dbReference type="UCSC" id="RGD:1587563">
    <property type="organism name" value="rat"/>
</dbReference>
<dbReference type="AGR" id="RGD:1587563"/>
<dbReference type="CTD" id="3820"/>
<dbReference type="RGD" id="1587563">
    <property type="gene designation" value="Klrb1"/>
</dbReference>
<dbReference type="eggNOG" id="KOG4297">
    <property type="taxonomic scope" value="Eukaryota"/>
</dbReference>
<dbReference type="GeneTree" id="ENSGT00940000154685"/>
<dbReference type="HOGENOM" id="CLU_049894_8_2_1"/>
<dbReference type="InParanoid" id="Q0ZUP0"/>
<dbReference type="OMA" id="WHRVALK"/>
<dbReference type="OrthoDB" id="538816at2759"/>
<dbReference type="PhylomeDB" id="Q0ZUP0"/>
<dbReference type="TreeFam" id="TF337735"/>
<dbReference type="PRO" id="PR:Q0ZUP0"/>
<dbReference type="Proteomes" id="UP000002494">
    <property type="component" value="Chromosome 4"/>
</dbReference>
<dbReference type="Bgee" id="ENSRNOG00000057410">
    <property type="expression patterns" value="Expressed in jejunum and 2 other cell types or tissues"/>
</dbReference>
<dbReference type="GO" id="GO:0009986">
    <property type="term" value="C:cell surface"/>
    <property type="evidence" value="ECO:0000318"/>
    <property type="project" value="GO_Central"/>
</dbReference>
<dbReference type="GO" id="GO:0005886">
    <property type="term" value="C:plasma membrane"/>
    <property type="evidence" value="ECO:0000318"/>
    <property type="project" value="GO_Central"/>
</dbReference>
<dbReference type="GO" id="GO:0030246">
    <property type="term" value="F:carbohydrate binding"/>
    <property type="evidence" value="ECO:0007669"/>
    <property type="project" value="UniProtKB-KW"/>
</dbReference>
<dbReference type="GO" id="GO:0038023">
    <property type="term" value="F:signaling receptor activity"/>
    <property type="evidence" value="ECO:0000318"/>
    <property type="project" value="GO_Central"/>
</dbReference>
<dbReference type="GO" id="GO:0004888">
    <property type="term" value="F:transmembrane signaling receptor activity"/>
    <property type="evidence" value="ECO:0000266"/>
    <property type="project" value="RGD"/>
</dbReference>
<dbReference type="GO" id="GO:0051132">
    <property type="term" value="P:NK T cell activation"/>
    <property type="evidence" value="ECO:0000266"/>
    <property type="project" value="RGD"/>
</dbReference>
<dbReference type="GO" id="GO:0042269">
    <property type="term" value="P:regulation of natural killer cell mediated cytotoxicity"/>
    <property type="evidence" value="ECO:0000318"/>
    <property type="project" value="GO_Central"/>
</dbReference>
<dbReference type="CDD" id="cd03593">
    <property type="entry name" value="CLECT_NK_receptors_like"/>
    <property type="match status" value="1"/>
</dbReference>
<dbReference type="Gene3D" id="3.10.100.10">
    <property type="entry name" value="Mannose-Binding Protein A, subunit A"/>
    <property type="match status" value="1"/>
</dbReference>
<dbReference type="InterPro" id="IPR001304">
    <property type="entry name" value="C-type_lectin-like"/>
</dbReference>
<dbReference type="InterPro" id="IPR016186">
    <property type="entry name" value="C-type_lectin-like/link_sf"/>
</dbReference>
<dbReference type="InterPro" id="IPR016187">
    <property type="entry name" value="CTDL_fold"/>
</dbReference>
<dbReference type="InterPro" id="IPR051527">
    <property type="entry name" value="KLR_subfamily_B"/>
</dbReference>
<dbReference type="InterPro" id="IPR033992">
    <property type="entry name" value="NKR-like_CTLD"/>
</dbReference>
<dbReference type="PANTHER" id="PTHR46784">
    <property type="entry name" value="KILLER CELL LECTIN-LIKE RECEPTOR SUBFAMILY B MEMBER 1"/>
    <property type="match status" value="1"/>
</dbReference>
<dbReference type="PANTHER" id="PTHR46784:SF2">
    <property type="entry name" value="KILLER CELL LECTIN-LIKE RECEPTOR SUBFAMILY B MEMBER 1"/>
    <property type="match status" value="1"/>
</dbReference>
<dbReference type="Pfam" id="PF00059">
    <property type="entry name" value="Lectin_C"/>
    <property type="match status" value="1"/>
</dbReference>
<dbReference type="SMART" id="SM00034">
    <property type="entry name" value="CLECT"/>
    <property type="match status" value="1"/>
</dbReference>
<dbReference type="SUPFAM" id="SSF56436">
    <property type="entry name" value="C-type lectin-like"/>
    <property type="match status" value="1"/>
</dbReference>
<dbReference type="PROSITE" id="PS50041">
    <property type="entry name" value="C_TYPE_LECTIN_2"/>
    <property type="match status" value="1"/>
</dbReference>
<organism>
    <name type="scientific">Rattus norvegicus</name>
    <name type="common">Rat</name>
    <dbReference type="NCBI Taxonomy" id="10116"/>
    <lineage>
        <taxon>Eukaryota</taxon>
        <taxon>Metazoa</taxon>
        <taxon>Chordata</taxon>
        <taxon>Craniata</taxon>
        <taxon>Vertebrata</taxon>
        <taxon>Euteleostomi</taxon>
        <taxon>Mammalia</taxon>
        <taxon>Eutheria</taxon>
        <taxon>Euarchontoglires</taxon>
        <taxon>Glires</taxon>
        <taxon>Rodentia</taxon>
        <taxon>Myomorpha</taxon>
        <taxon>Muroidea</taxon>
        <taxon>Muridae</taxon>
        <taxon>Murinae</taxon>
        <taxon>Rattus</taxon>
    </lineage>
</organism>
<sequence>MDAPVLYAELHLANTQGLRCTSPPSPRQDACWGSGWHRVALKLGCVGLILLLMGLSVLVGFLVQKPPIEKCSVAVQENKTEPTVRSTILECPRDWHLHWNKCLFISQTSRPWAEGLADCSLRGATLLLIGDGKELKLLQDFSKGKGQQFFIGLKYVQEDKVWKWMNGSILNTNLLRITGKNEENSCALISHTEVFSDSCSSDNHWICQKTLKRV</sequence>
<protein>
    <recommendedName>
        <fullName>Killer cell lectin-like receptor subfamily B member 1</fullName>
    </recommendedName>
    <alternativeName>
        <fullName>Immunoreceptor NKR-P1E</fullName>
    </alternativeName>
    <alternativeName>
        <fullName>Killer cell lectin-like receptor subfamily B member 1G</fullName>
    </alternativeName>
    <alternativeName>
        <fullName>Natural killer cell surface protein NKR-P1G</fullName>
    </alternativeName>
    <alternativeName>
        <fullName>Natural killer lectin-like receptor 1E</fullName>
    </alternativeName>
</protein>
<proteinExistence type="evidence at transcript level"/>
<gene>
    <name type="primary">Klrb1</name>
    <name evidence="7" type="synonym">Klrb1d</name>
    <name type="synonym">Klrb1g</name>
    <name evidence="6" type="synonym">Klrb6</name>
    <name evidence="4" type="synonym">Nkrp1e</name>
    <name evidence="3" type="synonym">Nkrp1g</name>
</gene>
<feature type="chain" id="PRO_0000317214" description="Killer cell lectin-like receptor subfamily B member 1">
    <location>
        <begin position="1"/>
        <end position="214"/>
    </location>
</feature>
<feature type="topological domain" description="Cytoplasmic" evidence="1">
    <location>
        <begin position="1"/>
        <end position="42"/>
    </location>
</feature>
<feature type="transmembrane region" description="Helical; Signal-anchor for type II membrane protein" evidence="1">
    <location>
        <begin position="43"/>
        <end position="63"/>
    </location>
</feature>
<feature type="topological domain" description="Extracellular" evidence="1">
    <location>
        <begin position="64"/>
        <end position="214"/>
    </location>
</feature>
<feature type="domain" description="C-type lectin" evidence="2">
    <location>
        <begin position="98"/>
        <end position="208"/>
    </location>
</feature>
<feature type="disulfide bond" evidence="2">
    <location>
        <begin position="119"/>
        <end position="207"/>
    </location>
</feature>
<feature type="disulfide bond" evidence="2">
    <location>
        <begin position="186"/>
        <end position="199"/>
    </location>
</feature>
<accession>Q0ZUP0</accession>
<evidence type="ECO:0000255" key="1"/>
<evidence type="ECO:0000255" key="2">
    <source>
        <dbReference type="PROSITE-ProRule" id="PRU00040"/>
    </source>
</evidence>
<evidence type="ECO:0000303" key="3">
    <source>
    </source>
</evidence>
<evidence type="ECO:0000312" key="4">
    <source>
        <dbReference type="EMBL" id="ABA40405.1"/>
    </source>
</evidence>
<evidence type="ECO:0000312" key="5">
    <source>
        <dbReference type="EMBL" id="ABA40406.1"/>
    </source>
</evidence>
<evidence type="ECO:0000312" key="6">
    <source>
        <dbReference type="EMBL" id="ABA41356.1"/>
    </source>
</evidence>
<evidence type="ECO:0000312" key="7">
    <source>
        <dbReference type="EMBL" id="ABO15820.1"/>
    </source>
</evidence>
<keyword id="KW-1015">Disulfide bond</keyword>
<keyword id="KW-0430">Lectin</keyword>
<keyword id="KW-0472">Membrane</keyword>
<keyword id="KW-1185">Reference proteome</keyword>
<keyword id="KW-0735">Signal-anchor</keyword>
<keyword id="KW-0812">Transmembrane</keyword>
<keyword id="KW-1133">Transmembrane helix</keyword>
<comment type="subcellular location">
    <subcellularLocation>
        <location evidence="1">Membrane</location>
        <topology evidence="1">Single-pass type II membrane protein</topology>
    </subcellularLocation>
</comment>
<name>KLRB1_RAT</name>
<reference evidence="7" key="1">
    <citation type="journal article" date="2007" name="Immunity">
        <title>Cytomegalovirus evasion of innate immunity by subversion of the NKR-P1B:Ocil/Clr-b missing-self axis.</title>
        <authorList>
            <person name="Voigt S."/>
            <person name="Mesci A."/>
            <person name="Ettinger J."/>
            <person name="Fine J.H."/>
            <person name="Chen P."/>
            <person name="Chou W."/>
            <person name="Carlyle J.R."/>
        </authorList>
    </citation>
    <scope>NUCLEOTIDE SEQUENCE [MRNA]</scope>
    <source>
        <strain evidence="7">WAG</strain>
        <tissue evidence="7">Spleen</tissue>
    </source>
</reference>
<reference evidence="6" key="2">
    <citation type="submission" date="2005-06" db="EMBL/GenBank/DDBJ databases">
        <title>Gene homogenization of exons encoding the ligand binding parts of regulatory leukocyte receptors.</title>
        <authorList>
            <person name="Fossum S."/>
            <person name="Flornes L.M."/>
            <person name="Saether P.C."/>
            <person name="Dissen E."/>
        </authorList>
    </citation>
    <scope>NUCLEOTIDE SEQUENCE [MRNA]</scope>
    <source>
        <strain evidence="6">PVG</strain>
    </source>
</reference>
<reference evidence="6" key="3">
    <citation type="submission" date="2005-08" db="EMBL/GenBank/DDBJ databases">
        <title>Novel NKR-P1E receptor expressed by rat NK cells.</title>
        <authorList>
            <person name="Dai K.-Z."/>
            <person name="Naper C."/>
            <person name="Vaage J.T."/>
        </authorList>
    </citation>
    <scope>NUCLEOTIDE SEQUENCE [MRNA]</scope>
    <source>
        <strain evidence="5">DA</strain>
        <strain evidence="4">PVG</strain>
    </source>
</reference>